<name>MTGA_ACIB5</name>
<gene>
    <name evidence="1" type="primary">mtgA</name>
    <name type="ordered locus">AB57_1068</name>
</gene>
<protein>
    <recommendedName>
        <fullName evidence="1">Biosynthetic peptidoglycan transglycosylase</fullName>
        <ecNumber evidence="1">2.4.99.28</ecNumber>
    </recommendedName>
    <alternativeName>
        <fullName evidence="1">Glycan polymerase</fullName>
    </alternativeName>
    <alternativeName>
        <fullName evidence="1">Peptidoglycan glycosyltransferase MtgA</fullName>
        <shortName evidence="1">PGT</shortName>
    </alternativeName>
</protein>
<comment type="function">
    <text evidence="1">Peptidoglycan polymerase that catalyzes glycan chain elongation from lipid-linked precursors.</text>
</comment>
<comment type="catalytic activity">
    <reaction evidence="1">
        <text>[GlcNAc-(1-&gt;4)-Mur2Ac(oyl-L-Ala-gamma-D-Glu-L-Lys-D-Ala-D-Ala)](n)-di-trans,octa-cis-undecaprenyl diphosphate + beta-D-GlcNAc-(1-&gt;4)-Mur2Ac(oyl-L-Ala-gamma-D-Glu-L-Lys-D-Ala-D-Ala)-di-trans,octa-cis-undecaprenyl diphosphate = [GlcNAc-(1-&gt;4)-Mur2Ac(oyl-L-Ala-gamma-D-Glu-L-Lys-D-Ala-D-Ala)](n+1)-di-trans,octa-cis-undecaprenyl diphosphate + di-trans,octa-cis-undecaprenyl diphosphate + H(+)</text>
        <dbReference type="Rhea" id="RHEA:23708"/>
        <dbReference type="Rhea" id="RHEA-COMP:9602"/>
        <dbReference type="Rhea" id="RHEA-COMP:9603"/>
        <dbReference type="ChEBI" id="CHEBI:15378"/>
        <dbReference type="ChEBI" id="CHEBI:58405"/>
        <dbReference type="ChEBI" id="CHEBI:60033"/>
        <dbReference type="ChEBI" id="CHEBI:78435"/>
        <dbReference type="EC" id="2.4.99.28"/>
    </reaction>
</comment>
<comment type="pathway">
    <text evidence="1">Cell wall biogenesis; peptidoglycan biosynthesis.</text>
</comment>
<comment type="subcellular location">
    <subcellularLocation>
        <location evidence="1">Cell inner membrane</location>
        <topology evidence="1">Single-pass membrane protein</topology>
    </subcellularLocation>
</comment>
<comment type="similarity">
    <text evidence="1">Belongs to the glycosyltransferase 51 family.</text>
</comment>
<keyword id="KW-0997">Cell inner membrane</keyword>
<keyword id="KW-1003">Cell membrane</keyword>
<keyword id="KW-0133">Cell shape</keyword>
<keyword id="KW-0961">Cell wall biogenesis/degradation</keyword>
<keyword id="KW-0328">Glycosyltransferase</keyword>
<keyword id="KW-0472">Membrane</keyword>
<keyword id="KW-0573">Peptidoglycan synthesis</keyword>
<keyword id="KW-0808">Transferase</keyword>
<keyword id="KW-0812">Transmembrane</keyword>
<keyword id="KW-1133">Transmembrane helix</keyword>
<evidence type="ECO:0000255" key="1">
    <source>
        <dbReference type="HAMAP-Rule" id="MF_00766"/>
    </source>
</evidence>
<sequence>MKAFIVRVLLIFIGAILLIQLWIFSSLVWWRTHEVDTTMFMRIDYWSDPSEPIIHEWLDYDDISDNFKHAILAGEDAKFIHHHGFDWDGIRFALERNNEEGEVVAGGSTVSQQLAKNLFLYNKRSFIRKGQETVATWMMERMWSKRRILEVYMNSVEFGKNLYGVEAAAQYYYGKSAKSLTREQAAFLAALLPDPKYYQDHRNDRKLQYRKRVILRYMNSTQIPE</sequence>
<accession>B7I8R1</accession>
<feature type="chain" id="PRO_1000133580" description="Biosynthetic peptidoglycan transglycosylase">
    <location>
        <begin position="1"/>
        <end position="225"/>
    </location>
</feature>
<feature type="transmembrane region" description="Helical" evidence="1">
    <location>
        <begin position="8"/>
        <end position="28"/>
    </location>
</feature>
<reference key="1">
    <citation type="journal article" date="2008" name="J. Bacteriol.">
        <title>Comparative genome sequence analysis of multidrug-resistant Acinetobacter baumannii.</title>
        <authorList>
            <person name="Adams M.D."/>
            <person name="Goglin K."/>
            <person name="Molyneaux N."/>
            <person name="Hujer K.M."/>
            <person name="Lavender H."/>
            <person name="Jamison J.J."/>
            <person name="MacDonald I.J."/>
            <person name="Martin K.M."/>
            <person name="Russo T."/>
            <person name="Campagnari A.A."/>
            <person name="Hujer A.M."/>
            <person name="Bonomo R.A."/>
            <person name="Gill S.R."/>
        </authorList>
    </citation>
    <scope>NUCLEOTIDE SEQUENCE [LARGE SCALE GENOMIC DNA]</scope>
    <source>
        <strain>AB0057</strain>
    </source>
</reference>
<organism>
    <name type="scientific">Acinetobacter baumannii (strain AB0057)</name>
    <dbReference type="NCBI Taxonomy" id="480119"/>
    <lineage>
        <taxon>Bacteria</taxon>
        <taxon>Pseudomonadati</taxon>
        <taxon>Pseudomonadota</taxon>
        <taxon>Gammaproteobacteria</taxon>
        <taxon>Moraxellales</taxon>
        <taxon>Moraxellaceae</taxon>
        <taxon>Acinetobacter</taxon>
        <taxon>Acinetobacter calcoaceticus/baumannii complex</taxon>
    </lineage>
</organism>
<dbReference type="EC" id="2.4.99.28" evidence="1"/>
<dbReference type="EMBL" id="CP001182">
    <property type="protein sequence ID" value="ACJ40855.1"/>
    <property type="molecule type" value="Genomic_DNA"/>
</dbReference>
<dbReference type="RefSeq" id="WP_000642930.1">
    <property type="nucleotide sequence ID" value="NC_011586.2"/>
</dbReference>
<dbReference type="SMR" id="B7I8R1"/>
<dbReference type="CAZy" id="GT51">
    <property type="family name" value="Glycosyltransferase Family 51"/>
</dbReference>
<dbReference type="KEGG" id="abn:AB57_1068"/>
<dbReference type="HOGENOM" id="CLU_006354_1_1_6"/>
<dbReference type="UniPathway" id="UPA00219"/>
<dbReference type="Proteomes" id="UP000007094">
    <property type="component" value="Chromosome"/>
</dbReference>
<dbReference type="GO" id="GO:0009274">
    <property type="term" value="C:peptidoglycan-based cell wall"/>
    <property type="evidence" value="ECO:0007669"/>
    <property type="project" value="InterPro"/>
</dbReference>
<dbReference type="GO" id="GO:0005886">
    <property type="term" value="C:plasma membrane"/>
    <property type="evidence" value="ECO:0007669"/>
    <property type="project" value="UniProtKB-SubCell"/>
</dbReference>
<dbReference type="GO" id="GO:0016763">
    <property type="term" value="F:pentosyltransferase activity"/>
    <property type="evidence" value="ECO:0007669"/>
    <property type="project" value="InterPro"/>
</dbReference>
<dbReference type="GO" id="GO:0008955">
    <property type="term" value="F:peptidoglycan glycosyltransferase activity"/>
    <property type="evidence" value="ECO:0007669"/>
    <property type="project" value="UniProtKB-UniRule"/>
</dbReference>
<dbReference type="GO" id="GO:0071555">
    <property type="term" value="P:cell wall organization"/>
    <property type="evidence" value="ECO:0007669"/>
    <property type="project" value="UniProtKB-KW"/>
</dbReference>
<dbReference type="GO" id="GO:0009252">
    <property type="term" value="P:peptidoglycan biosynthetic process"/>
    <property type="evidence" value="ECO:0007669"/>
    <property type="project" value="UniProtKB-UniRule"/>
</dbReference>
<dbReference type="GO" id="GO:0008360">
    <property type="term" value="P:regulation of cell shape"/>
    <property type="evidence" value="ECO:0007669"/>
    <property type="project" value="UniProtKB-KW"/>
</dbReference>
<dbReference type="Gene3D" id="1.10.3810.10">
    <property type="entry name" value="Biosynthetic peptidoglycan transglycosylase-like"/>
    <property type="match status" value="1"/>
</dbReference>
<dbReference type="HAMAP" id="MF_00766">
    <property type="entry name" value="PGT_MtgA"/>
    <property type="match status" value="1"/>
</dbReference>
<dbReference type="InterPro" id="IPR001264">
    <property type="entry name" value="Glyco_trans_51"/>
</dbReference>
<dbReference type="InterPro" id="IPR023346">
    <property type="entry name" value="Lysozyme-like_dom_sf"/>
</dbReference>
<dbReference type="InterPro" id="IPR036950">
    <property type="entry name" value="PBP_transglycosylase"/>
</dbReference>
<dbReference type="InterPro" id="IPR011812">
    <property type="entry name" value="Pep_trsgly"/>
</dbReference>
<dbReference type="NCBIfam" id="TIGR02070">
    <property type="entry name" value="mono_pep_trsgly"/>
    <property type="match status" value="1"/>
</dbReference>
<dbReference type="PANTHER" id="PTHR30400:SF0">
    <property type="entry name" value="BIOSYNTHETIC PEPTIDOGLYCAN TRANSGLYCOSYLASE"/>
    <property type="match status" value="1"/>
</dbReference>
<dbReference type="PANTHER" id="PTHR30400">
    <property type="entry name" value="MONOFUNCTIONAL BIOSYNTHETIC PEPTIDOGLYCAN TRANSGLYCOSYLASE"/>
    <property type="match status" value="1"/>
</dbReference>
<dbReference type="Pfam" id="PF00912">
    <property type="entry name" value="Transgly"/>
    <property type="match status" value="1"/>
</dbReference>
<dbReference type="SUPFAM" id="SSF53955">
    <property type="entry name" value="Lysozyme-like"/>
    <property type="match status" value="1"/>
</dbReference>
<proteinExistence type="inferred from homology"/>